<feature type="transit peptide" description="Mitochondrion" evidence="1">
    <location>
        <begin position="1"/>
        <end position="30"/>
    </location>
</feature>
<feature type="chain" id="PRO_0000459582" description="Large ribosomal subunit protein uL2my, C-terminal part">
    <location>
        <begin position="31"/>
        <end position="214"/>
    </location>
</feature>
<feature type="region of interest" description="Disordered" evidence="2">
    <location>
        <begin position="157"/>
        <end position="214"/>
    </location>
</feature>
<feature type="compositionally biased region" description="Basic and acidic residues" evidence="2">
    <location>
        <begin position="163"/>
        <end position="173"/>
    </location>
</feature>
<feature type="compositionally biased region" description="Low complexity" evidence="2">
    <location>
        <begin position="174"/>
        <end position="185"/>
    </location>
</feature>
<feature type="sequence conflict" description="In Ref. 4; CAA57902." evidence="4" ref="4">
    <original>PAFRNFSTGF</original>
    <variation>QHSHSLHLS</variation>
    <location>
        <begin position="25"/>
        <end position="34"/>
    </location>
</feature>
<protein>
    <recommendedName>
        <fullName evidence="3">Large ribosomal subunit protein uL2my, C-terminal part</fullName>
    </recommendedName>
</protein>
<keyword id="KW-0002">3D-structure</keyword>
<keyword id="KW-0496">Mitochondrion</keyword>
<keyword id="KW-1185">Reference proteome</keyword>
<keyword id="KW-0687">Ribonucleoprotein</keyword>
<keyword id="KW-0689">Ribosomal protein</keyword>
<keyword id="KW-0809">Transit peptide</keyword>
<accession>Q8VZU4</accession>
<accession>A0A178VVW1</accession>
<accession>Q39213</accession>
<proteinExistence type="evidence at protein level"/>
<dbReference type="EMBL" id="AC004005">
    <property type="protein sequence ID" value="AAM14906.1"/>
    <property type="molecule type" value="Genomic_DNA"/>
</dbReference>
<dbReference type="EMBL" id="CP002685">
    <property type="protein sequence ID" value="AEC10368.1"/>
    <property type="molecule type" value="Genomic_DNA"/>
</dbReference>
<dbReference type="EMBL" id="CP002685">
    <property type="protein sequence ID" value="AEC10369.1"/>
    <property type="molecule type" value="Genomic_DNA"/>
</dbReference>
<dbReference type="EMBL" id="CP002685">
    <property type="protein sequence ID" value="ANM62963.1"/>
    <property type="molecule type" value="Genomic_DNA"/>
</dbReference>
<dbReference type="EMBL" id="AY063831">
    <property type="protein sequence ID" value="AAL36187.1"/>
    <property type="molecule type" value="mRNA"/>
</dbReference>
<dbReference type="EMBL" id="AY091281">
    <property type="protein sequence ID" value="AAM14220.1"/>
    <property type="molecule type" value="mRNA"/>
</dbReference>
<dbReference type="EMBL" id="X82556">
    <property type="protein sequence ID" value="CAA57902.1"/>
    <property type="status" value="ALT_INIT"/>
    <property type="molecule type" value="mRNA"/>
</dbReference>
<dbReference type="PIR" id="S49579">
    <property type="entry name" value="S49579"/>
</dbReference>
<dbReference type="RefSeq" id="NP_001325084.1">
    <property type="nucleotide sequence ID" value="NM_001337071.1"/>
</dbReference>
<dbReference type="RefSeq" id="NP_566007.1">
    <property type="nucleotide sequence ID" value="NM_129969.5"/>
</dbReference>
<dbReference type="RefSeq" id="NP_973685.1">
    <property type="nucleotide sequence ID" value="NM_201956.3"/>
</dbReference>
<dbReference type="PDB" id="6XYW">
    <property type="method" value="EM"/>
    <property type="resolution" value="3.86 A"/>
    <property type="chains" value="Ab=1-214"/>
</dbReference>
<dbReference type="PDBsum" id="6XYW"/>
<dbReference type="EMDB" id="EMD-10654"/>
<dbReference type="SMR" id="Q8VZU4"/>
<dbReference type="FunCoup" id="Q8VZU4">
    <property type="interactions" value="505"/>
</dbReference>
<dbReference type="IntAct" id="Q8VZU4">
    <property type="interactions" value="2"/>
</dbReference>
<dbReference type="STRING" id="3702.Q8VZU4"/>
<dbReference type="PaxDb" id="3702-AT2G44065.2"/>
<dbReference type="ProteomicsDB" id="181861"/>
<dbReference type="EnsemblPlants" id="AT2G44065.1">
    <property type="protein sequence ID" value="AT2G44065.1"/>
    <property type="gene ID" value="AT2G44065"/>
</dbReference>
<dbReference type="EnsemblPlants" id="AT2G44065.2">
    <property type="protein sequence ID" value="AT2G44065.2"/>
    <property type="gene ID" value="AT2G44065"/>
</dbReference>
<dbReference type="EnsemblPlants" id="AT2G44065.3">
    <property type="protein sequence ID" value="AT2G44065.3"/>
    <property type="gene ID" value="AT2G44065"/>
</dbReference>
<dbReference type="GeneID" id="819012"/>
<dbReference type="Gramene" id="AT2G44065.1">
    <property type="protein sequence ID" value="AT2G44065.1"/>
    <property type="gene ID" value="AT2G44065"/>
</dbReference>
<dbReference type="Gramene" id="AT2G44065.2">
    <property type="protein sequence ID" value="AT2G44065.2"/>
    <property type="gene ID" value="AT2G44065"/>
</dbReference>
<dbReference type="Gramene" id="AT2G44065.3">
    <property type="protein sequence ID" value="AT2G44065.3"/>
    <property type="gene ID" value="AT2G44065"/>
</dbReference>
<dbReference type="KEGG" id="ath:AT2G44065"/>
<dbReference type="Araport" id="AT2G44065"/>
<dbReference type="TAIR" id="AT2G44065"/>
<dbReference type="eggNOG" id="KOG0438">
    <property type="taxonomic scope" value="Eukaryota"/>
</dbReference>
<dbReference type="HOGENOM" id="CLU_036235_5_1_1"/>
<dbReference type="OMA" id="CGYKTGP"/>
<dbReference type="OrthoDB" id="10267824at2759"/>
<dbReference type="PRO" id="PR:Q8VZU4"/>
<dbReference type="Proteomes" id="UP000006548">
    <property type="component" value="Chromosome 2"/>
</dbReference>
<dbReference type="ExpressionAtlas" id="Q8VZU4">
    <property type="expression patterns" value="baseline and differential"/>
</dbReference>
<dbReference type="GO" id="GO:0005739">
    <property type="term" value="C:mitochondrion"/>
    <property type="evidence" value="ECO:0007669"/>
    <property type="project" value="UniProtKB-SubCell"/>
</dbReference>
<dbReference type="GO" id="GO:1990904">
    <property type="term" value="C:ribonucleoprotein complex"/>
    <property type="evidence" value="ECO:0007669"/>
    <property type="project" value="UniProtKB-KW"/>
</dbReference>
<dbReference type="GO" id="GO:0005840">
    <property type="term" value="C:ribosome"/>
    <property type="evidence" value="ECO:0007669"/>
    <property type="project" value="UniProtKB-KW"/>
</dbReference>
<dbReference type="GO" id="GO:0003735">
    <property type="term" value="F:structural constituent of ribosome"/>
    <property type="evidence" value="ECO:0007669"/>
    <property type="project" value="InterPro"/>
</dbReference>
<dbReference type="GO" id="GO:0006412">
    <property type="term" value="P:translation"/>
    <property type="evidence" value="ECO:0007669"/>
    <property type="project" value="InterPro"/>
</dbReference>
<dbReference type="FunFam" id="4.10.950.10:FF:000001">
    <property type="entry name" value="50S ribosomal protein L2"/>
    <property type="match status" value="1"/>
</dbReference>
<dbReference type="FunFam" id="2.30.30.30:FF:000047">
    <property type="entry name" value="60S ribosomal protein L2, mitochondrial"/>
    <property type="match status" value="1"/>
</dbReference>
<dbReference type="Gene3D" id="2.30.30.30">
    <property type="match status" value="1"/>
</dbReference>
<dbReference type="Gene3D" id="4.10.950.10">
    <property type="entry name" value="Ribosomal protein L2, domain 3"/>
    <property type="match status" value="1"/>
</dbReference>
<dbReference type="InterPro" id="IPR014722">
    <property type="entry name" value="Rib_uL2_dom2"/>
</dbReference>
<dbReference type="InterPro" id="IPR002171">
    <property type="entry name" value="Ribosomal_uL2"/>
</dbReference>
<dbReference type="InterPro" id="IPR022669">
    <property type="entry name" value="Ribosomal_uL2_C"/>
</dbReference>
<dbReference type="InterPro" id="IPR022671">
    <property type="entry name" value="Ribosomal_uL2_CS"/>
</dbReference>
<dbReference type="InterPro" id="IPR014726">
    <property type="entry name" value="Ribosomal_uL2_dom3"/>
</dbReference>
<dbReference type="InterPro" id="IPR008991">
    <property type="entry name" value="Translation_prot_SH3-like_sf"/>
</dbReference>
<dbReference type="PANTHER" id="PTHR13691:SF72">
    <property type="entry name" value="EXPRESSED PROTEIN"/>
    <property type="match status" value="1"/>
</dbReference>
<dbReference type="PANTHER" id="PTHR13691">
    <property type="entry name" value="RIBOSOMAL PROTEIN L2"/>
    <property type="match status" value="1"/>
</dbReference>
<dbReference type="Pfam" id="PF03947">
    <property type="entry name" value="Ribosomal_L2_C"/>
    <property type="match status" value="1"/>
</dbReference>
<dbReference type="SMART" id="SM01382">
    <property type="entry name" value="Ribosomal_L2_C"/>
    <property type="match status" value="1"/>
</dbReference>
<dbReference type="SUPFAM" id="SSF50104">
    <property type="entry name" value="Translation proteins SH3-like domain"/>
    <property type="match status" value="1"/>
</dbReference>
<dbReference type="PROSITE" id="PS00467">
    <property type="entry name" value="RIBOSOMAL_L2"/>
    <property type="match status" value="1"/>
</dbReference>
<sequence>MSGLVALCRARASASSSLFNSVIRPAFRNFSTGFADTQNKSLVAQMKEEMLHMDINSMIGSSMPLGMMRIGTIIHNIEMNPGQGAKMVRAAGTNAKILKEPAKGKCLIKLPSGDTKWINAKCRATIGTVSNPSHGTKKLYKAGQSRWLGIRPKVRGVAMNPCDHPHGGGEGKSKSSGSRGRTSVSPWGKPCKGGYKSASVKKKKKRLAEAAAKM</sequence>
<comment type="subunit">
    <text evidence="4">Component of the mitochondrial ribosome large subunit.</text>
</comment>
<comment type="subcellular location">
    <subcellularLocation>
        <location evidence="4">Mitochondrion</location>
    </subcellularLocation>
</comment>
<comment type="miscellaneous">
    <text evidence="4">In Arabidopsis the N-terminal part of this protein is encoded by a mitochondrially-encoded gene (AtMg00560), while the C-terminal part is nuclearly encoded (this entry).</text>
</comment>
<comment type="similarity">
    <text evidence="4">Belongs to the universal ribosomal protein uL2 family.</text>
</comment>
<comment type="sequence caution" evidence="4">
    <conflict type="erroneous initiation">
        <sequence resource="EMBL-CDS" id="CAA57902"/>
    </conflict>
    <text>Truncated N-terminus.</text>
</comment>
<gene>
    <name evidence="4" type="primary">RPL2-C</name>
    <name evidence="5" type="ordered locus">At2g44065</name>
</gene>
<evidence type="ECO:0000255" key="1"/>
<evidence type="ECO:0000256" key="2">
    <source>
        <dbReference type="SAM" id="MobiDB-lite"/>
    </source>
</evidence>
<evidence type="ECO:0000303" key="3">
    <source>
    </source>
</evidence>
<evidence type="ECO:0000305" key="4"/>
<evidence type="ECO:0000312" key="5">
    <source>
        <dbReference type="EMBL" id="AEC10368.1"/>
    </source>
</evidence>
<evidence type="ECO:0000312" key="6">
    <source>
        <dbReference type="EMBL" id="CAA57902.1"/>
    </source>
</evidence>
<name>RM02C_ARATH</name>
<organism>
    <name type="scientific">Arabidopsis thaliana</name>
    <name type="common">Mouse-ear cress</name>
    <dbReference type="NCBI Taxonomy" id="3702"/>
    <lineage>
        <taxon>Eukaryota</taxon>
        <taxon>Viridiplantae</taxon>
        <taxon>Streptophyta</taxon>
        <taxon>Embryophyta</taxon>
        <taxon>Tracheophyta</taxon>
        <taxon>Spermatophyta</taxon>
        <taxon>Magnoliopsida</taxon>
        <taxon>eudicotyledons</taxon>
        <taxon>Gunneridae</taxon>
        <taxon>Pentapetalae</taxon>
        <taxon>rosids</taxon>
        <taxon>malvids</taxon>
        <taxon>Brassicales</taxon>
        <taxon>Brassicaceae</taxon>
        <taxon>Camelineae</taxon>
        <taxon>Arabidopsis</taxon>
    </lineage>
</organism>
<reference key="1">
    <citation type="journal article" date="1999" name="Nature">
        <title>Sequence and analysis of chromosome 2 of the plant Arabidopsis thaliana.</title>
        <authorList>
            <person name="Lin X."/>
            <person name="Kaul S."/>
            <person name="Rounsley S.D."/>
            <person name="Shea T.P."/>
            <person name="Benito M.-I."/>
            <person name="Town C.D."/>
            <person name="Fujii C.Y."/>
            <person name="Mason T.M."/>
            <person name="Bowman C.L."/>
            <person name="Barnstead M.E."/>
            <person name="Feldblyum T.V."/>
            <person name="Buell C.R."/>
            <person name="Ketchum K.A."/>
            <person name="Lee J.J."/>
            <person name="Ronning C.M."/>
            <person name="Koo H.L."/>
            <person name="Moffat K.S."/>
            <person name="Cronin L.A."/>
            <person name="Shen M."/>
            <person name="Pai G."/>
            <person name="Van Aken S."/>
            <person name="Umayam L."/>
            <person name="Tallon L.J."/>
            <person name="Gill J.E."/>
            <person name="Adams M.D."/>
            <person name="Carrera A.J."/>
            <person name="Creasy T.H."/>
            <person name="Goodman H.M."/>
            <person name="Somerville C.R."/>
            <person name="Copenhaver G.P."/>
            <person name="Preuss D."/>
            <person name="Nierman W.C."/>
            <person name="White O."/>
            <person name="Eisen J.A."/>
            <person name="Salzberg S.L."/>
            <person name="Fraser C.M."/>
            <person name="Venter J.C."/>
        </authorList>
    </citation>
    <scope>NUCLEOTIDE SEQUENCE [LARGE SCALE GENOMIC DNA]</scope>
    <source>
        <strain>cv. Columbia</strain>
    </source>
</reference>
<reference key="2">
    <citation type="journal article" date="2017" name="Plant J.">
        <title>Araport11: a complete reannotation of the Arabidopsis thaliana reference genome.</title>
        <authorList>
            <person name="Cheng C.Y."/>
            <person name="Krishnakumar V."/>
            <person name="Chan A.P."/>
            <person name="Thibaud-Nissen F."/>
            <person name="Schobel S."/>
            <person name="Town C.D."/>
        </authorList>
    </citation>
    <scope>GENOME REANNOTATION</scope>
    <source>
        <strain>cv. Columbia</strain>
    </source>
</reference>
<reference key="3">
    <citation type="journal article" date="2003" name="Science">
        <title>Empirical analysis of transcriptional activity in the Arabidopsis genome.</title>
        <authorList>
            <person name="Yamada K."/>
            <person name="Lim J."/>
            <person name="Dale J.M."/>
            <person name="Chen H."/>
            <person name="Shinn P."/>
            <person name="Palm C.J."/>
            <person name="Southwick A.M."/>
            <person name="Wu H.C."/>
            <person name="Kim C.J."/>
            <person name="Nguyen M."/>
            <person name="Pham P.K."/>
            <person name="Cheuk R.F."/>
            <person name="Karlin-Newmann G."/>
            <person name="Liu S.X."/>
            <person name="Lam B."/>
            <person name="Sakano H."/>
            <person name="Wu T."/>
            <person name="Yu G."/>
            <person name="Miranda M."/>
            <person name="Quach H.L."/>
            <person name="Tripp M."/>
            <person name="Chang C.H."/>
            <person name="Lee J.M."/>
            <person name="Toriumi M.J."/>
            <person name="Chan M.M."/>
            <person name="Tang C.C."/>
            <person name="Onodera C.S."/>
            <person name="Deng J.M."/>
            <person name="Akiyama K."/>
            <person name="Ansari Y."/>
            <person name="Arakawa T."/>
            <person name="Banh J."/>
            <person name="Banno F."/>
            <person name="Bowser L."/>
            <person name="Brooks S.Y."/>
            <person name="Carninci P."/>
            <person name="Chao Q."/>
            <person name="Choy N."/>
            <person name="Enju A."/>
            <person name="Goldsmith A.D."/>
            <person name="Gurjal M."/>
            <person name="Hansen N.F."/>
            <person name="Hayashizaki Y."/>
            <person name="Johnson-Hopson C."/>
            <person name="Hsuan V.W."/>
            <person name="Iida K."/>
            <person name="Karnes M."/>
            <person name="Khan S."/>
            <person name="Koesema E."/>
            <person name="Ishida J."/>
            <person name="Jiang P.X."/>
            <person name="Jones T."/>
            <person name="Kawai J."/>
            <person name="Kamiya A."/>
            <person name="Meyers C."/>
            <person name="Nakajima M."/>
            <person name="Narusaka M."/>
            <person name="Seki M."/>
            <person name="Sakurai T."/>
            <person name="Satou M."/>
            <person name="Tamse R."/>
            <person name="Vaysberg M."/>
            <person name="Wallender E.K."/>
            <person name="Wong C."/>
            <person name="Yamamura Y."/>
            <person name="Yuan S."/>
            <person name="Shinozaki K."/>
            <person name="Davis R.W."/>
            <person name="Theologis A."/>
            <person name="Ecker J.R."/>
        </authorList>
    </citation>
    <scope>NUCLEOTIDE SEQUENCE [LARGE SCALE MRNA]</scope>
    <source>
        <strain>cv. Columbia</strain>
    </source>
</reference>
<reference evidence="6" key="4">
    <citation type="submission" date="1994-11" db="EMBL/GenBank/DDBJ databases">
        <authorList>
            <person name="Schuster W."/>
        </authorList>
    </citation>
    <scope>NUCLEOTIDE SEQUENCE [MRNA] OF 5-214</scope>
    <source>
        <strain>cv. C24</strain>
    </source>
</reference>
<reference key="5">
    <citation type="journal article" date="2023" name="Plant Cell">
        <title>An updated nomenclature for plant ribosomal protein genes.</title>
        <authorList>
            <person name="Scarpin M.R."/>
            <person name="Busche M."/>
            <person name="Martinez R.E."/>
            <person name="Harper L.C."/>
            <person name="Reiser L."/>
            <person name="Szakonyi D."/>
            <person name="Merchante C."/>
            <person name="Lan T."/>
            <person name="Xiong W."/>
            <person name="Mo B."/>
            <person name="Tang G."/>
            <person name="Chen X."/>
            <person name="Bailey-Serres J."/>
            <person name="Browning K.S."/>
            <person name="Brunkard J.O."/>
        </authorList>
    </citation>
    <scope>NOMENCLATURE</scope>
</reference>